<proteinExistence type="evidence at transcript level"/>
<protein>
    <recommendedName>
        <fullName evidence="5">Cytochrome P450 monooxygenase astD</fullName>
        <ecNumber evidence="7">1.-.-.-</ecNumber>
    </recommendedName>
    <alternativeName>
        <fullName evidence="5">Astellolide biosynthesis cluster protein D</fullName>
    </alternativeName>
</protein>
<evidence type="ECO:0000250" key="1">
    <source>
        <dbReference type="UniProtKB" id="P04798"/>
    </source>
</evidence>
<evidence type="ECO:0000255" key="2"/>
<evidence type="ECO:0000255" key="3">
    <source>
        <dbReference type="PROSITE-ProRule" id="PRU00498"/>
    </source>
</evidence>
<evidence type="ECO:0000269" key="4">
    <source>
    </source>
</evidence>
<evidence type="ECO:0000303" key="5">
    <source>
    </source>
</evidence>
<evidence type="ECO:0000305" key="6"/>
<evidence type="ECO:0000305" key="7">
    <source>
    </source>
</evidence>
<comment type="function">
    <text evidence="4">Cytochrome P450 monooxygenase; part of the gene cluster that mediates the biosynthesis of astellolides, drimane-type sesquiterpene esters that show antimicrobial, anti-inflammatory, and anti-tumor activities (PubMed:27628599). The first step in astellolide biosynthesis is performed by the sesquiterpene cyclase astC that catalyzes the formation of drimanyl pyrophosphate from farnesyl pyrophosphate (PubMed:27628599). Drimanyl pyrophosphate is then dephosphorylated by the sesquiterpene phosphatase astI to produce drimanyl monophosphate which is further dephosphorylated to drim-8-ene-11-ol by atsK (PubMed:27628599). Drim-8-ene-11-ol is converted to confertifolin, probably by the cytochrome P450 monooxygenase astD and/or the dehydrogenase astE (PubMed:27628599). The cytochrome P450 monooxygenases astB, astF and astJ then hydroxylate confertifolin at C6, C14, or C15 to form trihydroxy confertifolin (PubMed:27628599). The nonribosomal peptide synthetase astA catalyzes ester bond formation between trihydroxy contifolin and benzoic acid (BA) or 4-hydroxy benzoic acid (4HBA), leading to the formation of dideacetyl astellolides A and B, respectively (PubMed:27628599). Finally, the O-acetyltransferase astG converts dideacetyl astellolides A and B into deacetyl astellolides A and B (PubMed:27628599).</text>
</comment>
<comment type="cofactor">
    <cofactor evidence="1">
        <name>heme</name>
        <dbReference type="ChEBI" id="CHEBI:30413"/>
    </cofactor>
</comment>
<comment type="pathway">
    <text evidence="4">Secondary metabolite biosynthesis; terpenoid biosynthesis.</text>
</comment>
<comment type="subcellular location">
    <subcellularLocation>
        <location evidence="2">Membrane</location>
        <topology evidence="2">Single-pass membrane protein</topology>
    </subcellularLocation>
</comment>
<comment type="induction">
    <text evidence="4">Expression is regulated by the secondary metabolite regulator cclA.</text>
</comment>
<comment type="disruption phenotype">
    <text evidence="4">Leads to the loss of intermediates such as confertifolin.</text>
</comment>
<comment type="similarity">
    <text evidence="6">Belongs to the cytochrome P450 family.</text>
</comment>
<reference key="1">
    <citation type="journal article" date="2005" name="Nature">
        <title>Genome sequencing and analysis of Aspergillus oryzae.</title>
        <authorList>
            <person name="Machida M."/>
            <person name="Asai K."/>
            <person name="Sano M."/>
            <person name="Tanaka T."/>
            <person name="Kumagai T."/>
            <person name="Terai G."/>
            <person name="Kusumoto K."/>
            <person name="Arima T."/>
            <person name="Akita O."/>
            <person name="Kashiwagi Y."/>
            <person name="Abe K."/>
            <person name="Gomi K."/>
            <person name="Horiuchi H."/>
            <person name="Kitamoto K."/>
            <person name="Kobayashi T."/>
            <person name="Takeuchi M."/>
            <person name="Denning D.W."/>
            <person name="Galagan J.E."/>
            <person name="Nierman W.C."/>
            <person name="Yu J."/>
            <person name="Archer D.B."/>
            <person name="Bennett J.W."/>
            <person name="Bhatnagar D."/>
            <person name="Cleveland T.E."/>
            <person name="Fedorova N.D."/>
            <person name="Gotoh O."/>
            <person name="Horikawa H."/>
            <person name="Hosoyama A."/>
            <person name="Ichinomiya M."/>
            <person name="Igarashi R."/>
            <person name="Iwashita K."/>
            <person name="Juvvadi P.R."/>
            <person name="Kato M."/>
            <person name="Kato Y."/>
            <person name="Kin T."/>
            <person name="Kokubun A."/>
            <person name="Maeda H."/>
            <person name="Maeyama N."/>
            <person name="Maruyama J."/>
            <person name="Nagasaki H."/>
            <person name="Nakajima T."/>
            <person name="Oda K."/>
            <person name="Okada K."/>
            <person name="Paulsen I."/>
            <person name="Sakamoto K."/>
            <person name="Sawano T."/>
            <person name="Takahashi M."/>
            <person name="Takase K."/>
            <person name="Terabayashi Y."/>
            <person name="Wortman J.R."/>
            <person name="Yamada O."/>
            <person name="Yamagata Y."/>
            <person name="Anazawa H."/>
            <person name="Hata Y."/>
            <person name="Koide Y."/>
            <person name="Komori T."/>
            <person name="Koyama Y."/>
            <person name="Minetoki T."/>
            <person name="Suharnan S."/>
            <person name="Tanaka A."/>
            <person name="Isono K."/>
            <person name="Kuhara S."/>
            <person name="Ogasawara N."/>
            <person name="Kikuchi H."/>
        </authorList>
    </citation>
    <scope>NUCLEOTIDE SEQUENCE [LARGE SCALE GENOMIC DNA]</scope>
    <source>
        <strain>ATCC 42149 / RIB 40</strain>
    </source>
</reference>
<reference key="2">
    <citation type="journal article" date="2016" name="Sci. Rep.">
        <title>Identification of a novel sesquiterpene biosynthetic machinery involved in astellolide biosynthesis.</title>
        <authorList>
            <person name="Shinohara Y."/>
            <person name="Takahashi S."/>
            <person name="Osada H."/>
            <person name="Koyama Y."/>
        </authorList>
    </citation>
    <scope>INDUCTION</scope>
    <scope>FUNCTION</scope>
    <scope>DISRUPTION PHENOTYPE</scope>
    <scope>PATHWAY</scope>
</reference>
<dbReference type="EC" id="1.-.-.-" evidence="7"/>
<dbReference type="EMBL" id="BA000051">
    <property type="protein sequence ID" value="BAE60010.1"/>
    <property type="molecule type" value="Genomic_DNA"/>
</dbReference>
<dbReference type="SMR" id="Q2UEK5"/>
<dbReference type="STRING" id="510516.Q2UEK5"/>
<dbReference type="GlyCosmos" id="Q2UEK5">
    <property type="glycosylation" value="2 sites, No reported glycans"/>
</dbReference>
<dbReference type="EnsemblFungi" id="BAE60010">
    <property type="protein sequence ID" value="BAE60010"/>
    <property type="gene ID" value="AO090026000581"/>
</dbReference>
<dbReference type="VEuPathDB" id="FungiDB:AO090026000581"/>
<dbReference type="HOGENOM" id="CLU_001570_14_11_1"/>
<dbReference type="OMA" id="ATSTCHE"/>
<dbReference type="UniPathway" id="UPA00213"/>
<dbReference type="Proteomes" id="UP000006564">
    <property type="component" value="Chromosome 3"/>
</dbReference>
<dbReference type="GO" id="GO:0016020">
    <property type="term" value="C:membrane"/>
    <property type="evidence" value="ECO:0007669"/>
    <property type="project" value="UniProtKB-SubCell"/>
</dbReference>
<dbReference type="GO" id="GO:0020037">
    <property type="term" value="F:heme binding"/>
    <property type="evidence" value="ECO:0007669"/>
    <property type="project" value="InterPro"/>
</dbReference>
<dbReference type="GO" id="GO:0005506">
    <property type="term" value="F:iron ion binding"/>
    <property type="evidence" value="ECO:0007669"/>
    <property type="project" value="InterPro"/>
</dbReference>
<dbReference type="GO" id="GO:0004497">
    <property type="term" value="F:monooxygenase activity"/>
    <property type="evidence" value="ECO:0007669"/>
    <property type="project" value="UniProtKB-KW"/>
</dbReference>
<dbReference type="GO" id="GO:0016705">
    <property type="term" value="F:oxidoreductase activity, acting on paired donors, with incorporation or reduction of molecular oxygen"/>
    <property type="evidence" value="ECO:0007669"/>
    <property type="project" value="InterPro"/>
</dbReference>
<dbReference type="GO" id="GO:0016114">
    <property type="term" value="P:terpenoid biosynthetic process"/>
    <property type="evidence" value="ECO:0007669"/>
    <property type="project" value="UniProtKB-UniPathway"/>
</dbReference>
<dbReference type="CDD" id="cd11058">
    <property type="entry name" value="CYP60B-like"/>
    <property type="match status" value="1"/>
</dbReference>
<dbReference type="Gene3D" id="1.10.630.10">
    <property type="entry name" value="Cytochrome P450"/>
    <property type="match status" value="1"/>
</dbReference>
<dbReference type="InterPro" id="IPR001128">
    <property type="entry name" value="Cyt_P450"/>
</dbReference>
<dbReference type="InterPro" id="IPR017972">
    <property type="entry name" value="Cyt_P450_CS"/>
</dbReference>
<dbReference type="InterPro" id="IPR002401">
    <property type="entry name" value="Cyt_P450_E_grp-I"/>
</dbReference>
<dbReference type="InterPro" id="IPR036396">
    <property type="entry name" value="Cyt_P450_sf"/>
</dbReference>
<dbReference type="InterPro" id="IPR050121">
    <property type="entry name" value="Cytochrome_P450_monoxygenase"/>
</dbReference>
<dbReference type="PANTHER" id="PTHR24305">
    <property type="entry name" value="CYTOCHROME P450"/>
    <property type="match status" value="1"/>
</dbReference>
<dbReference type="PANTHER" id="PTHR24305:SF210">
    <property type="entry name" value="CYTOCHROME P450 MONOOXYGENASE ASQL-RELATED"/>
    <property type="match status" value="1"/>
</dbReference>
<dbReference type="Pfam" id="PF00067">
    <property type="entry name" value="p450"/>
    <property type="match status" value="1"/>
</dbReference>
<dbReference type="PRINTS" id="PR00463">
    <property type="entry name" value="EP450I"/>
</dbReference>
<dbReference type="PRINTS" id="PR00385">
    <property type="entry name" value="P450"/>
</dbReference>
<dbReference type="SUPFAM" id="SSF48264">
    <property type="entry name" value="Cytochrome P450"/>
    <property type="match status" value="1"/>
</dbReference>
<dbReference type="PROSITE" id="PS00086">
    <property type="entry name" value="CYTOCHROME_P450"/>
    <property type="match status" value="1"/>
</dbReference>
<feature type="chain" id="PRO_0000450115" description="Cytochrome P450 monooxygenase astD">
    <location>
        <begin position="1"/>
        <end position="512"/>
    </location>
</feature>
<feature type="transmembrane region" description="Helical" evidence="2">
    <location>
        <begin position="19"/>
        <end position="39"/>
    </location>
</feature>
<feature type="binding site" description="axial binding residue" evidence="1">
    <location>
        <position position="449"/>
    </location>
    <ligand>
        <name>heme</name>
        <dbReference type="ChEBI" id="CHEBI:30413"/>
    </ligand>
    <ligandPart>
        <name>Fe</name>
        <dbReference type="ChEBI" id="CHEBI:18248"/>
    </ligandPart>
</feature>
<feature type="glycosylation site" description="N-linked (GlcNAc...) asparagine" evidence="3">
    <location>
        <position position="191"/>
    </location>
</feature>
<feature type="glycosylation site" description="N-linked (GlcNAc...) asparagine" evidence="3">
    <location>
        <position position="413"/>
    </location>
</feature>
<keyword id="KW-0325">Glycoprotein</keyword>
<keyword id="KW-0349">Heme</keyword>
<keyword id="KW-0408">Iron</keyword>
<keyword id="KW-0472">Membrane</keyword>
<keyword id="KW-0479">Metal-binding</keyword>
<keyword id="KW-0503">Monooxygenase</keyword>
<keyword id="KW-0560">Oxidoreductase</keyword>
<keyword id="KW-1185">Reference proteome</keyword>
<keyword id="KW-0812">Transmembrane</keyword>
<keyword id="KW-1133">Transmembrane helix</keyword>
<accession>Q2UEK5</accession>
<organism>
    <name type="scientific">Aspergillus oryzae (strain ATCC 42149 / RIB 40)</name>
    <name type="common">Yellow koji mold</name>
    <dbReference type="NCBI Taxonomy" id="510516"/>
    <lineage>
        <taxon>Eukaryota</taxon>
        <taxon>Fungi</taxon>
        <taxon>Dikarya</taxon>
        <taxon>Ascomycota</taxon>
        <taxon>Pezizomycotina</taxon>
        <taxon>Eurotiomycetes</taxon>
        <taxon>Eurotiomycetidae</taxon>
        <taxon>Eurotiales</taxon>
        <taxon>Aspergillaceae</taxon>
        <taxon>Aspergillus</taxon>
        <taxon>Aspergillus subgen. Circumdati</taxon>
    </lineage>
</organism>
<name>ASTD_ASPOR</name>
<sequence length="512" mass="57813">MEALPTYLESFWHSGGGTMGISILVMLSTFLALGTIFVYRIWLHPLSGFPGPKCCSVSSIPVAWAQLRGRNHEFVSSLHRKYGSVVRISPSELSFISGAAWNDIYSRSKGRPALERDRTFFNDMLVDPETITMANEATHSRIRRAMAPAFSPRALLEQEPIIQANIKLLMDKLEARAGSGGAPTDLRAWFNYTTFDLIGDLAFGESFGCLATSTCHEWVQFVLDHFYTSTLLHVVHRFHPFNRVLAALLPKSLIEKRKAHDSMTLTKVHRRLEVQGRRNDFTQHLLDAAEAGTLSSREVEKQASVLILAGSETTSVALTFAIYLVLTNKPVLDQLNDELHSTFKEEQEINLLSVNQLKYLHAVIQEALRFCPPISNGFPRQTPPQGATVDGMFIPGKTVVNINHWAAYRSPRNFTLPEQFLPERWLGDPRFDEDAKDVFQPFSVGPRNCIGKKFAYDSMKLILAKFLWRFKPTLLDKSRSWLAHQPTFVSFHQPPLLVDLEIKGSDAFPVRE</sequence>
<gene>
    <name evidence="5" type="primary">astD</name>
    <name type="ORF">AO090026000581</name>
</gene>